<geneLocation type="chloroplast"/>
<dbReference type="EMBL" id="U38804">
    <property type="protein sequence ID" value="AAC08080.1"/>
    <property type="molecule type" value="Genomic_DNA"/>
</dbReference>
<dbReference type="PIR" id="S73115">
    <property type="entry name" value="S73115"/>
</dbReference>
<dbReference type="RefSeq" id="NP_053804.1">
    <property type="nucleotide sequence ID" value="NC_000925.1"/>
</dbReference>
<dbReference type="SMR" id="P51194"/>
<dbReference type="GeneID" id="809818"/>
<dbReference type="GO" id="GO:0009535">
    <property type="term" value="C:chloroplast thylakoid membrane"/>
    <property type="evidence" value="ECO:0007669"/>
    <property type="project" value="UniProtKB-SubCell"/>
</dbReference>
<dbReference type="GO" id="GO:0009522">
    <property type="term" value="C:photosystem I"/>
    <property type="evidence" value="ECO:0007669"/>
    <property type="project" value="UniProtKB-KW"/>
</dbReference>
<dbReference type="GO" id="GO:0015979">
    <property type="term" value="P:photosynthesis"/>
    <property type="evidence" value="ECO:0007669"/>
    <property type="project" value="UniProtKB-UniRule"/>
</dbReference>
<dbReference type="Gene3D" id="1.20.5.510">
    <property type="entry name" value="Single helix bin"/>
    <property type="match status" value="1"/>
</dbReference>
<dbReference type="HAMAP" id="MF_00522">
    <property type="entry name" value="PSI_PsaJ"/>
    <property type="match status" value="1"/>
</dbReference>
<dbReference type="InterPro" id="IPR002615">
    <property type="entry name" value="PSI_PsaJ"/>
</dbReference>
<dbReference type="InterPro" id="IPR036062">
    <property type="entry name" value="PSI_PsaJ_sf"/>
</dbReference>
<dbReference type="PANTHER" id="PTHR36082">
    <property type="match status" value="1"/>
</dbReference>
<dbReference type="PANTHER" id="PTHR36082:SF2">
    <property type="entry name" value="PHOTOSYSTEM I REACTION CENTER SUBUNIT IX"/>
    <property type="match status" value="1"/>
</dbReference>
<dbReference type="Pfam" id="PF01701">
    <property type="entry name" value="PSI_PsaJ"/>
    <property type="match status" value="1"/>
</dbReference>
<dbReference type="SUPFAM" id="SSF81544">
    <property type="entry name" value="Subunit IX of photosystem I reaction centre, PsaJ"/>
    <property type="match status" value="1"/>
</dbReference>
<organism>
    <name type="scientific">Porphyra purpurea</name>
    <name type="common">Red seaweed</name>
    <name type="synonym">Ulva purpurea</name>
    <dbReference type="NCBI Taxonomy" id="2787"/>
    <lineage>
        <taxon>Eukaryota</taxon>
        <taxon>Rhodophyta</taxon>
        <taxon>Bangiophyceae</taxon>
        <taxon>Bangiales</taxon>
        <taxon>Bangiaceae</taxon>
        <taxon>Porphyra</taxon>
    </lineage>
</organism>
<name>PSAJ_PORPU</name>
<reference key="1">
    <citation type="journal article" date="1995" name="Plant Mol. Biol. Rep.">
        <title>Complete nucleotide sequence of the Porphyra purpurea chloroplast genome.</title>
        <authorList>
            <person name="Reith M.E."/>
            <person name="Munholland J."/>
        </authorList>
    </citation>
    <scope>NUCLEOTIDE SEQUENCE [LARGE SCALE GENOMIC DNA]</scope>
    <source>
        <strain>Avonport</strain>
    </source>
</reference>
<feature type="chain" id="PRO_0000207812" description="Photosystem I reaction center subunit IX">
    <location>
        <begin position="1"/>
        <end position="42"/>
    </location>
</feature>
<feature type="transmembrane region" description="Helical" evidence="2">
    <location>
        <begin position="8"/>
        <end position="28"/>
    </location>
</feature>
<comment type="function">
    <text evidence="1">May help in the organization of the PsaE and PsaF subunits.</text>
</comment>
<comment type="subcellular location">
    <subcellularLocation>
        <location evidence="1">Plastid</location>
        <location evidence="1">Chloroplast thylakoid membrane</location>
        <topology evidence="1">Single-pass membrane protein</topology>
    </subcellularLocation>
</comment>
<comment type="similarity">
    <text evidence="3">Belongs to the PsaJ family.</text>
</comment>
<sequence>MNNNFTKYLSTAPVIGVLWMTFTAGFIIELNRFFPDVLYFYL</sequence>
<evidence type="ECO:0000250" key="1"/>
<evidence type="ECO:0000255" key="2"/>
<evidence type="ECO:0000305" key="3"/>
<proteinExistence type="inferred from homology"/>
<protein>
    <recommendedName>
        <fullName>Photosystem I reaction center subunit IX</fullName>
    </recommendedName>
    <alternativeName>
        <fullName>PSI-J</fullName>
    </alternativeName>
</protein>
<keyword id="KW-0150">Chloroplast</keyword>
<keyword id="KW-0472">Membrane</keyword>
<keyword id="KW-0602">Photosynthesis</keyword>
<keyword id="KW-0603">Photosystem I</keyword>
<keyword id="KW-0934">Plastid</keyword>
<keyword id="KW-0793">Thylakoid</keyword>
<keyword id="KW-0812">Transmembrane</keyword>
<keyword id="KW-1133">Transmembrane helix</keyword>
<accession>P51194</accession>
<gene>
    <name type="primary">psaJ</name>
</gene>